<name>BAG1_CAEBR</name>
<comment type="function">
    <text evidence="1">May inhibit the chaperone activity of HSP70/HSC70 by promoting substrate release in an ATP-dependent manner.</text>
</comment>
<comment type="subunit">
    <text evidence="1">Homodimer or homotetramer.</text>
</comment>
<comment type="domain">
    <text evidence="1">The BAG domain probably mediates direct interaction with HSP70.</text>
</comment>
<sequence>MKLVVSCSSVQTIVDILDESEGENSISTLGQLRERIAADNDVDAETMKLLHRGKFLQGEADVSLSTINFKENDKIIVMGGKNAMADDAGFKMLMQYEKHNLSNLQKTYDVNLKDVADLERGFLEKPKQVEMGKKLEKKVKFFNEEAERHLETLDGMNIITDATPDNQAKRNREKRKTLINGIQTLLNQNDALLRRLEQYMSILNGDILE</sequence>
<reference key="1">
    <citation type="journal article" date="2003" name="PLoS Biol.">
        <title>The genome sequence of Caenorhabditis briggsae: a platform for comparative genomics.</title>
        <authorList>
            <person name="Stein L.D."/>
            <person name="Bao Z."/>
            <person name="Blasiar D."/>
            <person name="Blumenthal T."/>
            <person name="Brent M.R."/>
            <person name="Chen N."/>
            <person name="Chinwalla A."/>
            <person name="Clarke L."/>
            <person name="Clee C."/>
            <person name="Coghlan A."/>
            <person name="Coulson A."/>
            <person name="D'Eustachio P."/>
            <person name="Fitch D.H.A."/>
            <person name="Fulton L.A."/>
            <person name="Fulton R.E."/>
            <person name="Griffiths-Jones S."/>
            <person name="Harris T.W."/>
            <person name="Hillier L.W."/>
            <person name="Kamath R."/>
            <person name="Kuwabara P.E."/>
            <person name="Mardis E.R."/>
            <person name="Marra M.A."/>
            <person name="Miner T.L."/>
            <person name="Minx P."/>
            <person name="Mullikin J.C."/>
            <person name="Plumb R.W."/>
            <person name="Rogers J."/>
            <person name="Schein J.E."/>
            <person name="Sohrmann M."/>
            <person name="Spieth J."/>
            <person name="Stajich J.E."/>
            <person name="Wei C."/>
            <person name="Willey D."/>
            <person name="Wilson R.K."/>
            <person name="Durbin R.M."/>
            <person name="Waterston R.H."/>
        </authorList>
    </citation>
    <scope>NUCLEOTIDE SEQUENCE [LARGE SCALE GENOMIC DNA]</scope>
    <source>
        <strain>AF16</strain>
    </source>
</reference>
<evidence type="ECO:0000250" key="1"/>
<evidence type="ECO:0000255" key="2">
    <source>
        <dbReference type="PROSITE-ProRule" id="PRU00214"/>
    </source>
</evidence>
<evidence type="ECO:0000255" key="3">
    <source>
        <dbReference type="PROSITE-ProRule" id="PRU00369"/>
    </source>
</evidence>
<proteinExistence type="inferred from homology"/>
<protein>
    <recommendedName>
        <fullName>BAG family molecular chaperone regulator 1</fullName>
    </recommendedName>
</protein>
<dbReference type="EMBL" id="HE600940">
    <property type="protein sequence ID" value="CAP31602.1"/>
    <property type="molecule type" value="Genomic_DNA"/>
</dbReference>
<dbReference type="SMR" id="Q61D31"/>
<dbReference type="FunCoup" id="Q61D31">
    <property type="interactions" value="1003"/>
</dbReference>
<dbReference type="STRING" id="6238.Q61D31"/>
<dbReference type="EnsemblMetazoa" id="CBG12655.1">
    <property type="protein sequence ID" value="CBG12655.1"/>
    <property type="gene ID" value="WBGene00033572"/>
</dbReference>
<dbReference type="KEGG" id="cbr:CBG_12655"/>
<dbReference type="CTD" id="8582151"/>
<dbReference type="WormBase" id="CBG12655">
    <property type="protein sequence ID" value="CBP17556"/>
    <property type="gene ID" value="WBGene00033572"/>
    <property type="gene designation" value="Cbr-bag-1"/>
</dbReference>
<dbReference type="eggNOG" id="ENOG502S5YF">
    <property type="taxonomic scope" value="Eukaryota"/>
</dbReference>
<dbReference type="HOGENOM" id="CLU_1316430_0_0_1"/>
<dbReference type="InParanoid" id="Q61D31"/>
<dbReference type="OMA" id="YLNRCEH"/>
<dbReference type="OrthoDB" id="417450at2759"/>
<dbReference type="Proteomes" id="UP000008549">
    <property type="component" value="Unassembled WGS sequence"/>
</dbReference>
<dbReference type="GO" id="GO:0005737">
    <property type="term" value="C:cytoplasm"/>
    <property type="evidence" value="ECO:0000318"/>
    <property type="project" value="GO_Central"/>
</dbReference>
<dbReference type="GO" id="GO:0005829">
    <property type="term" value="C:cytosol"/>
    <property type="evidence" value="ECO:0000318"/>
    <property type="project" value="GO_Central"/>
</dbReference>
<dbReference type="GO" id="GO:0016020">
    <property type="term" value="C:membrane"/>
    <property type="evidence" value="ECO:0000318"/>
    <property type="project" value="GO_Central"/>
</dbReference>
<dbReference type="GO" id="GO:0005634">
    <property type="term" value="C:nucleus"/>
    <property type="evidence" value="ECO:0000318"/>
    <property type="project" value="GO_Central"/>
</dbReference>
<dbReference type="GO" id="GO:0000774">
    <property type="term" value="F:adenyl-nucleotide exchange factor activity"/>
    <property type="evidence" value="ECO:0000318"/>
    <property type="project" value="GO_Central"/>
</dbReference>
<dbReference type="GO" id="GO:0001671">
    <property type="term" value="F:ATPase activator activity"/>
    <property type="evidence" value="ECO:0007669"/>
    <property type="project" value="EnsemblMetazoa"/>
</dbReference>
<dbReference type="GO" id="GO:0051087">
    <property type="term" value="F:protein-folding chaperone binding"/>
    <property type="evidence" value="ECO:0000318"/>
    <property type="project" value="GO_Central"/>
</dbReference>
<dbReference type="GO" id="GO:0050821">
    <property type="term" value="P:protein stabilization"/>
    <property type="evidence" value="ECO:0000318"/>
    <property type="project" value="GO_Central"/>
</dbReference>
<dbReference type="Gene3D" id="1.20.58.120">
    <property type="entry name" value="BAG domain"/>
    <property type="match status" value="1"/>
</dbReference>
<dbReference type="Gene3D" id="3.10.20.90">
    <property type="entry name" value="Phosphatidylinositol 3-kinase Catalytic Subunit, Chain A, domain 1"/>
    <property type="match status" value="1"/>
</dbReference>
<dbReference type="InterPro" id="IPR017093">
    <property type="entry name" value="BAG-1"/>
</dbReference>
<dbReference type="InterPro" id="IPR036533">
    <property type="entry name" value="BAG_dom_sf"/>
</dbReference>
<dbReference type="InterPro" id="IPR003103">
    <property type="entry name" value="BAG_domain"/>
</dbReference>
<dbReference type="InterPro" id="IPR000626">
    <property type="entry name" value="Ubiquitin-like_dom"/>
</dbReference>
<dbReference type="InterPro" id="IPR029071">
    <property type="entry name" value="Ubiquitin-like_domsf"/>
</dbReference>
<dbReference type="Pfam" id="PF02179">
    <property type="entry name" value="BAG"/>
    <property type="match status" value="1"/>
</dbReference>
<dbReference type="Pfam" id="PF00240">
    <property type="entry name" value="ubiquitin"/>
    <property type="match status" value="1"/>
</dbReference>
<dbReference type="PIRSF" id="PIRSF037029">
    <property type="entry name" value="BAG_1"/>
    <property type="match status" value="1"/>
</dbReference>
<dbReference type="SMART" id="SM00264">
    <property type="entry name" value="BAG"/>
    <property type="match status" value="1"/>
</dbReference>
<dbReference type="SUPFAM" id="SSF63491">
    <property type="entry name" value="BAG domain"/>
    <property type="match status" value="1"/>
</dbReference>
<dbReference type="SUPFAM" id="SSF54236">
    <property type="entry name" value="Ubiquitin-like"/>
    <property type="match status" value="1"/>
</dbReference>
<dbReference type="PROSITE" id="PS51035">
    <property type="entry name" value="BAG"/>
    <property type="match status" value="1"/>
</dbReference>
<dbReference type="PROSITE" id="PS50053">
    <property type="entry name" value="UBIQUITIN_2"/>
    <property type="match status" value="1"/>
</dbReference>
<keyword id="KW-0143">Chaperone</keyword>
<keyword id="KW-1185">Reference proteome</keyword>
<gene>
    <name type="primary">bag-1</name>
    <name type="ORF">CBG12655</name>
</gene>
<accession>Q61D31</accession>
<accession>A8XG96</accession>
<feature type="chain" id="PRO_0000088876" description="BAG family molecular chaperone regulator 1">
    <location>
        <begin position="1"/>
        <end position="209"/>
    </location>
</feature>
<feature type="domain" description="Ubiquitin-like" evidence="2">
    <location>
        <begin position="7"/>
        <end position="84"/>
    </location>
</feature>
<feature type="domain" description="BAG" evidence="3">
    <location>
        <begin position="107"/>
        <end position="193"/>
    </location>
</feature>
<organism>
    <name type="scientific">Caenorhabditis briggsae</name>
    <dbReference type="NCBI Taxonomy" id="6238"/>
    <lineage>
        <taxon>Eukaryota</taxon>
        <taxon>Metazoa</taxon>
        <taxon>Ecdysozoa</taxon>
        <taxon>Nematoda</taxon>
        <taxon>Chromadorea</taxon>
        <taxon>Rhabditida</taxon>
        <taxon>Rhabditina</taxon>
        <taxon>Rhabditomorpha</taxon>
        <taxon>Rhabditoidea</taxon>
        <taxon>Rhabditidae</taxon>
        <taxon>Peloderinae</taxon>
        <taxon>Caenorhabditis</taxon>
    </lineage>
</organism>